<proteinExistence type="inferred from homology"/>
<organism>
    <name type="scientific">Geobacillus kaustophilus (strain HTA426)</name>
    <dbReference type="NCBI Taxonomy" id="235909"/>
    <lineage>
        <taxon>Bacteria</taxon>
        <taxon>Bacillati</taxon>
        <taxon>Bacillota</taxon>
        <taxon>Bacilli</taxon>
        <taxon>Bacillales</taxon>
        <taxon>Anoxybacillaceae</taxon>
        <taxon>Geobacillus</taxon>
        <taxon>Geobacillus thermoleovorans group</taxon>
    </lineage>
</organism>
<accession>Q5KYQ7</accession>
<comment type="function">
    <text evidence="1">Part of an ABC transporter complex involved in carbohydrate import. Could be involved in ribose, galactose and/or methyl galactoside import. Responsible for energy coupling to the transport system.</text>
</comment>
<comment type="catalytic activity">
    <reaction evidence="1">
        <text>D-ribose(out) + ATP + H2O = D-ribose(in) + ADP + phosphate + H(+)</text>
        <dbReference type="Rhea" id="RHEA:29903"/>
        <dbReference type="ChEBI" id="CHEBI:15377"/>
        <dbReference type="ChEBI" id="CHEBI:15378"/>
        <dbReference type="ChEBI" id="CHEBI:30616"/>
        <dbReference type="ChEBI" id="CHEBI:43474"/>
        <dbReference type="ChEBI" id="CHEBI:47013"/>
        <dbReference type="ChEBI" id="CHEBI:456216"/>
        <dbReference type="EC" id="7.5.2.7"/>
    </reaction>
</comment>
<comment type="catalytic activity">
    <reaction evidence="1">
        <text>D-galactose(out) + ATP + H2O = D-galactose(in) + ADP + phosphate + H(+)</text>
        <dbReference type="Rhea" id="RHEA:60156"/>
        <dbReference type="ChEBI" id="CHEBI:4139"/>
        <dbReference type="ChEBI" id="CHEBI:15377"/>
        <dbReference type="ChEBI" id="CHEBI:15378"/>
        <dbReference type="ChEBI" id="CHEBI:30616"/>
        <dbReference type="ChEBI" id="CHEBI:43474"/>
        <dbReference type="ChEBI" id="CHEBI:456216"/>
        <dbReference type="EC" id="7.5.2.11"/>
    </reaction>
</comment>
<comment type="subcellular location">
    <subcellularLocation>
        <location evidence="1">Cell membrane</location>
        <topology evidence="1">Peripheral membrane protein</topology>
    </subcellularLocation>
</comment>
<comment type="similarity">
    <text evidence="1">Belongs to the ABC transporter superfamily. Carbohydrate importer 2 (CUT2) (TC 3.A.1.2) family.</text>
</comment>
<gene>
    <name type="ordered locus">GK1894</name>
</gene>
<name>RGMG_GEOKA</name>
<sequence length="503" mass="56524">MSEDYVLEMIDITKEFPGVKALDGVQLKVKRGTVHALMGENGAGKSTLMKILIGIYTPDRGKIILDGEELKVSTIKHALDRGISMIHQELSPVPNMTVAENIFLGREPSYPFAGWVKMKELVKKTRQLFERLEIDIDPNAKMADLSIANMQMVEIAKAISYHSKLIIMDEPTSAITEKEVHHLFRIIRSLKKEGVSIIYITHKMDELEQITDEVTVLRDGKYIGTKPSHQMTRDELIQMMVGRELNQIFHKPKVPIGEVALSVQGLTKKGKFHDVSFEVRKGEIVGFAGLMGSGRTEVLESVFGVTKPDAGDIYVHGKKATIRSTRDAIRYGMGLLTEDRKLTGLFLPLSVEDNMITVTVNQYTKAGFLQQRKIREDCQRLAEQLSIKTPSLQQLIKYLSGGNQQKALIARWLLHNPDILFLDEPTRGIDVGAKAEIYHLIFELAKNGKAIIVVSSEMPEILGLSDRVIVMHEGRKMGELTREEATQERIMQLATGQLIETKR</sequence>
<evidence type="ECO:0000255" key="1">
    <source>
        <dbReference type="HAMAP-Rule" id="MF_01717"/>
    </source>
</evidence>
<keyword id="KW-0067">ATP-binding</keyword>
<keyword id="KW-1003">Cell membrane</keyword>
<keyword id="KW-0472">Membrane</keyword>
<keyword id="KW-0547">Nucleotide-binding</keyword>
<keyword id="KW-1185">Reference proteome</keyword>
<keyword id="KW-0677">Repeat</keyword>
<keyword id="KW-0762">Sugar transport</keyword>
<keyword id="KW-1278">Translocase</keyword>
<keyword id="KW-0813">Transport</keyword>
<dbReference type="EC" id="7.5.2.11" evidence="1"/>
<dbReference type="EC" id="7.5.2.7" evidence="1"/>
<dbReference type="EMBL" id="BA000043">
    <property type="protein sequence ID" value="BAD76179.1"/>
    <property type="molecule type" value="Genomic_DNA"/>
</dbReference>
<dbReference type="RefSeq" id="WP_011231384.1">
    <property type="nucleotide sequence ID" value="NC_006510.1"/>
</dbReference>
<dbReference type="SMR" id="Q5KYQ7"/>
<dbReference type="STRING" id="235909.GK1894"/>
<dbReference type="KEGG" id="gka:GK1894"/>
<dbReference type="PATRIC" id="fig|235909.7.peg.2032"/>
<dbReference type="eggNOG" id="COG1129">
    <property type="taxonomic scope" value="Bacteria"/>
</dbReference>
<dbReference type="HOGENOM" id="CLU_000604_92_3_9"/>
<dbReference type="Proteomes" id="UP000001172">
    <property type="component" value="Chromosome"/>
</dbReference>
<dbReference type="GO" id="GO:0005886">
    <property type="term" value="C:plasma membrane"/>
    <property type="evidence" value="ECO:0007669"/>
    <property type="project" value="UniProtKB-SubCell"/>
</dbReference>
<dbReference type="GO" id="GO:0015611">
    <property type="term" value="F:ABC-type D-ribose transporter activity"/>
    <property type="evidence" value="ECO:0007669"/>
    <property type="project" value="UniProtKB-EC"/>
</dbReference>
<dbReference type="GO" id="GO:0005524">
    <property type="term" value="F:ATP binding"/>
    <property type="evidence" value="ECO:0007669"/>
    <property type="project" value="UniProtKB-KW"/>
</dbReference>
<dbReference type="GO" id="GO:0016887">
    <property type="term" value="F:ATP hydrolysis activity"/>
    <property type="evidence" value="ECO:0007669"/>
    <property type="project" value="InterPro"/>
</dbReference>
<dbReference type="CDD" id="cd03216">
    <property type="entry name" value="ABC_Carb_Monos_I"/>
    <property type="match status" value="1"/>
</dbReference>
<dbReference type="CDD" id="cd03215">
    <property type="entry name" value="ABC_Carb_Monos_II"/>
    <property type="match status" value="1"/>
</dbReference>
<dbReference type="FunFam" id="3.40.50.300:FF:000126">
    <property type="entry name" value="Galactose/methyl galactoside import ATP-binding protein MglA"/>
    <property type="match status" value="1"/>
</dbReference>
<dbReference type="FunFam" id="3.40.50.300:FF:000127">
    <property type="entry name" value="Ribose import ATP-binding protein RbsA"/>
    <property type="match status" value="1"/>
</dbReference>
<dbReference type="Gene3D" id="3.40.50.300">
    <property type="entry name" value="P-loop containing nucleotide triphosphate hydrolases"/>
    <property type="match status" value="2"/>
</dbReference>
<dbReference type="InterPro" id="IPR003593">
    <property type="entry name" value="AAA+_ATPase"/>
</dbReference>
<dbReference type="InterPro" id="IPR050107">
    <property type="entry name" value="ABC_carbohydrate_import_ATPase"/>
</dbReference>
<dbReference type="InterPro" id="IPR003439">
    <property type="entry name" value="ABC_transporter-like_ATP-bd"/>
</dbReference>
<dbReference type="InterPro" id="IPR017871">
    <property type="entry name" value="ABC_transporter-like_CS"/>
</dbReference>
<dbReference type="InterPro" id="IPR027417">
    <property type="entry name" value="P-loop_NTPase"/>
</dbReference>
<dbReference type="PANTHER" id="PTHR43790">
    <property type="entry name" value="CARBOHYDRATE TRANSPORT ATP-BINDING PROTEIN MG119-RELATED"/>
    <property type="match status" value="1"/>
</dbReference>
<dbReference type="PANTHER" id="PTHR43790:SF7">
    <property type="entry name" value="GALACTOSE_METHYL GALACTOSIDE IMPORT ATP-BINDING PROTEIN MGLA"/>
    <property type="match status" value="1"/>
</dbReference>
<dbReference type="Pfam" id="PF00005">
    <property type="entry name" value="ABC_tran"/>
    <property type="match status" value="2"/>
</dbReference>
<dbReference type="SMART" id="SM00382">
    <property type="entry name" value="AAA"/>
    <property type="match status" value="2"/>
</dbReference>
<dbReference type="SUPFAM" id="SSF52540">
    <property type="entry name" value="P-loop containing nucleoside triphosphate hydrolases"/>
    <property type="match status" value="2"/>
</dbReference>
<dbReference type="PROSITE" id="PS00211">
    <property type="entry name" value="ABC_TRANSPORTER_1"/>
    <property type="match status" value="1"/>
</dbReference>
<dbReference type="PROSITE" id="PS50893">
    <property type="entry name" value="ABC_TRANSPORTER_2"/>
    <property type="match status" value="2"/>
</dbReference>
<dbReference type="PROSITE" id="PS51260">
    <property type="entry name" value="MGLA"/>
    <property type="match status" value="1"/>
</dbReference>
<dbReference type="PROSITE" id="PS51254">
    <property type="entry name" value="RBSA"/>
    <property type="match status" value="1"/>
</dbReference>
<reference key="1">
    <citation type="journal article" date="2004" name="Nucleic Acids Res.">
        <title>Thermoadaptation trait revealed by the genome sequence of thermophilic Geobacillus kaustophilus.</title>
        <authorList>
            <person name="Takami H."/>
            <person name="Takaki Y."/>
            <person name="Chee G.-J."/>
            <person name="Nishi S."/>
            <person name="Shimamura S."/>
            <person name="Suzuki H."/>
            <person name="Matsui S."/>
            <person name="Uchiyama I."/>
        </authorList>
    </citation>
    <scope>NUCLEOTIDE SEQUENCE [LARGE SCALE GENOMIC DNA]</scope>
    <source>
        <strain>HTA426</strain>
    </source>
</reference>
<feature type="chain" id="PRO_0000262980" description="Putative ribose/galactose/methyl galactoside import ATP-binding protein">
    <location>
        <begin position="1"/>
        <end position="503"/>
    </location>
</feature>
<feature type="domain" description="ABC transporter 1" evidence="1">
    <location>
        <begin position="7"/>
        <end position="244"/>
    </location>
</feature>
<feature type="domain" description="ABC transporter 2" evidence="1">
    <location>
        <begin position="254"/>
        <end position="498"/>
    </location>
</feature>
<feature type="binding site" evidence="1">
    <location>
        <begin position="39"/>
        <end position="46"/>
    </location>
    <ligand>
        <name>ATP</name>
        <dbReference type="ChEBI" id="CHEBI:30616"/>
    </ligand>
</feature>
<protein>
    <recommendedName>
        <fullName evidence="1">Putative ribose/galactose/methyl galactoside import ATP-binding protein</fullName>
        <ecNumber evidence="1">7.5.2.11</ecNumber>
        <ecNumber evidence="1">7.5.2.7</ecNumber>
    </recommendedName>
</protein>